<keyword id="KW-0963">Cytoplasm</keyword>
<keyword id="KW-0489">Methyltransferase</keyword>
<keyword id="KW-0698">rRNA processing</keyword>
<keyword id="KW-0949">S-adenosyl-L-methionine</keyword>
<keyword id="KW-0808">Transferase</keyword>
<name>RLMH_CLOB8</name>
<gene>
    <name evidence="1" type="primary">rlmH</name>
    <name type="ordered locus">Cbei_5057</name>
</gene>
<comment type="function">
    <text evidence="1">Specifically methylates the pseudouridine at position 1915 (m3Psi1915) in 23S rRNA.</text>
</comment>
<comment type="catalytic activity">
    <reaction evidence="1">
        <text>pseudouridine(1915) in 23S rRNA + S-adenosyl-L-methionine = N(3)-methylpseudouridine(1915) in 23S rRNA + S-adenosyl-L-homocysteine + H(+)</text>
        <dbReference type="Rhea" id="RHEA:42752"/>
        <dbReference type="Rhea" id="RHEA-COMP:10221"/>
        <dbReference type="Rhea" id="RHEA-COMP:10222"/>
        <dbReference type="ChEBI" id="CHEBI:15378"/>
        <dbReference type="ChEBI" id="CHEBI:57856"/>
        <dbReference type="ChEBI" id="CHEBI:59789"/>
        <dbReference type="ChEBI" id="CHEBI:65314"/>
        <dbReference type="ChEBI" id="CHEBI:74486"/>
        <dbReference type="EC" id="2.1.1.177"/>
    </reaction>
</comment>
<comment type="subunit">
    <text evidence="1">Homodimer.</text>
</comment>
<comment type="subcellular location">
    <subcellularLocation>
        <location evidence="1">Cytoplasm</location>
    </subcellularLocation>
</comment>
<comment type="similarity">
    <text evidence="1">Belongs to the RNA methyltransferase RlmH family.</text>
</comment>
<accession>A6M3I3</accession>
<organism>
    <name type="scientific">Clostridium beijerinckii (strain ATCC 51743 / NCIMB 8052)</name>
    <name type="common">Clostridium acetobutylicum</name>
    <dbReference type="NCBI Taxonomy" id="290402"/>
    <lineage>
        <taxon>Bacteria</taxon>
        <taxon>Bacillati</taxon>
        <taxon>Bacillota</taxon>
        <taxon>Clostridia</taxon>
        <taxon>Eubacteriales</taxon>
        <taxon>Clostridiaceae</taxon>
        <taxon>Clostridium</taxon>
    </lineage>
</organism>
<feature type="chain" id="PRO_1000082797" description="Ribosomal RNA large subunit methyltransferase H">
    <location>
        <begin position="1"/>
        <end position="159"/>
    </location>
</feature>
<feature type="binding site" evidence="1">
    <location>
        <position position="108"/>
    </location>
    <ligand>
        <name>S-adenosyl-L-methionine</name>
        <dbReference type="ChEBI" id="CHEBI:59789"/>
    </ligand>
</feature>
<feature type="binding site" evidence="1">
    <location>
        <begin position="127"/>
        <end position="132"/>
    </location>
    <ligand>
        <name>S-adenosyl-L-methionine</name>
        <dbReference type="ChEBI" id="CHEBI:59789"/>
    </ligand>
</feature>
<sequence length="159" mass="18082">MNITIITVGKIKEKYLRDAIEEYSKRLGRYCKLDIVELVDEKTPDNASEKEEEVIKEKEGQGILNKIKDNMFVIAMDLGGKQLTSEEFAGYIDNLGVTGNPNIAFIIGGSLGISKSVLARANYKLCFSKMTFPHQLFRVMLLEQIYRGFRIIKGEPYHK</sequence>
<reference key="1">
    <citation type="submission" date="2007-06" db="EMBL/GenBank/DDBJ databases">
        <title>Complete sequence of Clostridium beijerinckii NCIMB 8052.</title>
        <authorList>
            <consortium name="US DOE Joint Genome Institute"/>
            <person name="Copeland A."/>
            <person name="Lucas S."/>
            <person name="Lapidus A."/>
            <person name="Barry K."/>
            <person name="Detter J.C."/>
            <person name="Glavina del Rio T."/>
            <person name="Hammon N."/>
            <person name="Israni S."/>
            <person name="Dalin E."/>
            <person name="Tice H."/>
            <person name="Pitluck S."/>
            <person name="Sims D."/>
            <person name="Brettin T."/>
            <person name="Bruce D."/>
            <person name="Tapia R."/>
            <person name="Brainard J."/>
            <person name="Schmutz J."/>
            <person name="Larimer F."/>
            <person name="Land M."/>
            <person name="Hauser L."/>
            <person name="Kyrpides N."/>
            <person name="Mikhailova N."/>
            <person name="Bennet G."/>
            <person name="Cann I."/>
            <person name="Chen J.-S."/>
            <person name="Contreras A.L."/>
            <person name="Jones D."/>
            <person name="Kashket E."/>
            <person name="Mitchell W."/>
            <person name="Stoddard S."/>
            <person name="Schwarz W."/>
            <person name="Qureshi N."/>
            <person name="Young M."/>
            <person name="Shi Z."/>
            <person name="Ezeji T."/>
            <person name="White B."/>
            <person name="Blaschek H."/>
            <person name="Richardson P."/>
        </authorList>
    </citation>
    <scope>NUCLEOTIDE SEQUENCE [LARGE SCALE GENOMIC DNA]</scope>
    <source>
        <strain>ATCC 51743 / NCIMB 8052</strain>
    </source>
</reference>
<dbReference type="EC" id="2.1.1.177" evidence="1"/>
<dbReference type="EMBL" id="CP000721">
    <property type="protein sequence ID" value="ABR37163.1"/>
    <property type="molecule type" value="Genomic_DNA"/>
</dbReference>
<dbReference type="RefSeq" id="WP_012061206.1">
    <property type="nucleotide sequence ID" value="NC_009617.1"/>
</dbReference>
<dbReference type="SMR" id="A6M3I3"/>
<dbReference type="GeneID" id="66348007"/>
<dbReference type="KEGG" id="cbe:Cbei_5057"/>
<dbReference type="eggNOG" id="COG1576">
    <property type="taxonomic scope" value="Bacteria"/>
</dbReference>
<dbReference type="HOGENOM" id="CLU_100552_0_0_9"/>
<dbReference type="Proteomes" id="UP000000565">
    <property type="component" value="Chromosome"/>
</dbReference>
<dbReference type="GO" id="GO:0005737">
    <property type="term" value="C:cytoplasm"/>
    <property type="evidence" value="ECO:0007669"/>
    <property type="project" value="UniProtKB-SubCell"/>
</dbReference>
<dbReference type="GO" id="GO:0070038">
    <property type="term" value="F:rRNA (pseudouridine-N3-)-methyltransferase activity"/>
    <property type="evidence" value="ECO:0007669"/>
    <property type="project" value="UniProtKB-UniRule"/>
</dbReference>
<dbReference type="CDD" id="cd18081">
    <property type="entry name" value="RlmH-like"/>
    <property type="match status" value="1"/>
</dbReference>
<dbReference type="Gene3D" id="3.40.1280.10">
    <property type="match status" value="1"/>
</dbReference>
<dbReference type="HAMAP" id="MF_00658">
    <property type="entry name" value="23SrRNA_methyltr_H"/>
    <property type="match status" value="1"/>
</dbReference>
<dbReference type="InterPro" id="IPR029028">
    <property type="entry name" value="Alpha/beta_knot_MTases"/>
</dbReference>
<dbReference type="InterPro" id="IPR003742">
    <property type="entry name" value="RlmH-like"/>
</dbReference>
<dbReference type="InterPro" id="IPR029026">
    <property type="entry name" value="tRNA_m1G_MTases_N"/>
</dbReference>
<dbReference type="NCBIfam" id="NF000985">
    <property type="entry name" value="PRK00103.1-3"/>
    <property type="match status" value="1"/>
</dbReference>
<dbReference type="NCBIfam" id="TIGR00246">
    <property type="entry name" value="tRNA_RlmH_YbeA"/>
    <property type="match status" value="1"/>
</dbReference>
<dbReference type="PANTHER" id="PTHR33603">
    <property type="entry name" value="METHYLTRANSFERASE"/>
    <property type="match status" value="1"/>
</dbReference>
<dbReference type="PANTHER" id="PTHR33603:SF1">
    <property type="entry name" value="RIBOSOMAL RNA LARGE SUBUNIT METHYLTRANSFERASE H"/>
    <property type="match status" value="1"/>
</dbReference>
<dbReference type="Pfam" id="PF02590">
    <property type="entry name" value="SPOUT_MTase"/>
    <property type="match status" value="1"/>
</dbReference>
<dbReference type="PIRSF" id="PIRSF004505">
    <property type="entry name" value="MT_bac"/>
    <property type="match status" value="1"/>
</dbReference>
<dbReference type="SUPFAM" id="SSF75217">
    <property type="entry name" value="alpha/beta knot"/>
    <property type="match status" value="1"/>
</dbReference>
<evidence type="ECO:0000255" key="1">
    <source>
        <dbReference type="HAMAP-Rule" id="MF_00658"/>
    </source>
</evidence>
<proteinExistence type="inferred from homology"/>
<protein>
    <recommendedName>
        <fullName evidence="1">Ribosomal RNA large subunit methyltransferase H</fullName>
        <ecNumber evidence="1">2.1.1.177</ecNumber>
    </recommendedName>
    <alternativeName>
        <fullName evidence="1">23S rRNA (pseudouridine1915-N3)-methyltransferase</fullName>
    </alternativeName>
    <alternativeName>
        <fullName evidence="1">23S rRNA m3Psi1915 methyltransferase</fullName>
    </alternativeName>
    <alternativeName>
        <fullName evidence="1">rRNA (pseudouridine-N3-)-methyltransferase RlmH</fullName>
    </alternativeName>
</protein>